<feature type="chain" id="PRO_1000142949" description="Large ribosomal subunit protein uL16">
    <location>
        <begin position="1"/>
        <end position="147"/>
    </location>
</feature>
<organism>
    <name type="scientific">Clostridium botulinum (strain Okra / Type B1)</name>
    <dbReference type="NCBI Taxonomy" id="498213"/>
    <lineage>
        <taxon>Bacteria</taxon>
        <taxon>Bacillati</taxon>
        <taxon>Bacillota</taxon>
        <taxon>Clostridia</taxon>
        <taxon>Eubacteriales</taxon>
        <taxon>Clostridiaceae</taxon>
        <taxon>Clostridium</taxon>
    </lineage>
</organism>
<keyword id="KW-0687">Ribonucleoprotein</keyword>
<keyword id="KW-0689">Ribosomal protein</keyword>
<keyword id="KW-0694">RNA-binding</keyword>
<keyword id="KW-0699">rRNA-binding</keyword>
<keyword id="KW-0820">tRNA-binding</keyword>
<accession>B1IGE7</accession>
<dbReference type="EMBL" id="CP000939">
    <property type="protein sequence ID" value="ACA45087.1"/>
    <property type="molecule type" value="Genomic_DNA"/>
</dbReference>
<dbReference type="RefSeq" id="WP_003357619.1">
    <property type="nucleotide sequence ID" value="NC_010516.1"/>
</dbReference>
<dbReference type="SMR" id="B1IGE7"/>
<dbReference type="GeneID" id="92940243"/>
<dbReference type="KEGG" id="cbb:CLD_1031"/>
<dbReference type="HOGENOM" id="CLU_078858_2_1_9"/>
<dbReference type="Proteomes" id="UP000008541">
    <property type="component" value="Chromosome"/>
</dbReference>
<dbReference type="GO" id="GO:0022625">
    <property type="term" value="C:cytosolic large ribosomal subunit"/>
    <property type="evidence" value="ECO:0007669"/>
    <property type="project" value="TreeGrafter"/>
</dbReference>
<dbReference type="GO" id="GO:0019843">
    <property type="term" value="F:rRNA binding"/>
    <property type="evidence" value="ECO:0007669"/>
    <property type="project" value="UniProtKB-UniRule"/>
</dbReference>
<dbReference type="GO" id="GO:0003735">
    <property type="term" value="F:structural constituent of ribosome"/>
    <property type="evidence" value="ECO:0007669"/>
    <property type="project" value="InterPro"/>
</dbReference>
<dbReference type="GO" id="GO:0000049">
    <property type="term" value="F:tRNA binding"/>
    <property type="evidence" value="ECO:0007669"/>
    <property type="project" value="UniProtKB-KW"/>
</dbReference>
<dbReference type="GO" id="GO:0006412">
    <property type="term" value="P:translation"/>
    <property type="evidence" value="ECO:0007669"/>
    <property type="project" value="UniProtKB-UniRule"/>
</dbReference>
<dbReference type="CDD" id="cd01433">
    <property type="entry name" value="Ribosomal_L16_L10e"/>
    <property type="match status" value="1"/>
</dbReference>
<dbReference type="FunFam" id="3.90.1170.10:FF:000001">
    <property type="entry name" value="50S ribosomal protein L16"/>
    <property type="match status" value="1"/>
</dbReference>
<dbReference type="Gene3D" id="3.90.1170.10">
    <property type="entry name" value="Ribosomal protein L10e/L16"/>
    <property type="match status" value="1"/>
</dbReference>
<dbReference type="HAMAP" id="MF_01342">
    <property type="entry name" value="Ribosomal_uL16"/>
    <property type="match status" value="1"/>
</dbReference>
<dbReference type="InterPro" id="IPR047873">
    <property type="entry name" value="Ribosomal_uL16"/>
</dbReference>
<dbReference type="InterPro" id="IPR000114">
    <property type="entry name" value="Ribosomal_uL16_bact-type"/>
</dbReference>
<dbReference type="InterPro" id="IPR020798">
    <property type="entry name" value="Ribosomal_uL16_CS"/>
</dbReference>
<dbReference type="InterPro" id="IPR016180">
    <property type="entry name" value="Ribosomal_uL16_dom"/>
</dbReference>
<dbReference type="InterPro" id="IPR036920">
    <property type="entry name" value="Ribosomal_uL16_sf"/>
</dbReference>
<dbReference type="NCBIfam" id="TIGR01164">
    <property type="entry name" value="rplP_bact"/>
    <property type="match status" value="1"/>
</dbReference>
<dbReference type="PANTHER" id="PTHR12220">
    <property type="entry name" value="50S/60S RIBOSOMAL PROTEIN L16"/>
    <property type="match status" value="1"/>
</dbReference>
<dbReference type="PANTHER" id="PTHR12220:SF13">
    <property type="entry name" value="LARGE RIBOSOMAL SUBUNIT PROTEIN UL16M"/>
    <property type="match status" value="1"/>
</dbReference>
<dbReference type="Pfam" id="PF00252">
    <property type="entry name" value="Ribosomal_L16"/>
    <property type="match status" value="1"/>
</dbReference>
<dbReference type="PRINTS" id="PR00060">
    <property type="entry name" value="RIBOSOMALL16"/>
</dbReference>
<dbReference type="SUPFAM" id="SSF54686">
    <property type="entry name" value="Ribosomal protein L16p/L10e"/>
    <property type="match status" value="1"/>
</dbReference>
<dbReference type="PROSITE" id="PS00586">
    <property type="entry name" value="RIBOSOMAL_L16_1"/>
    <property type="match status" value="1"/>
</dbReference>
<dbReference type="PROSITE" id="PS00701">
    <property type="entry name" value="RIBOSOMAL_L16_2"/>
    <property type="match status" value="1"/>
</dbReference>
<comment type="function">
    <text evidence="1">Binds 23S rRNA and is also seen to make contacts with the A and possibly P site tRNAs.</text>
</comment>
<comment type="subunit">
    <text evidence="1">Part of the 50S ribosomal subunit.</text>
</comment>
<comment type="similarity">
    <text evidence="1">Belongs to the universal ribosomal protein uL16 family.</text>
</comment>
<reference key="1">
    <citation type="journal article" date="2007" name="PLoS ONE">
        <title>Analysis of the neurotoxin complex genes in Clostridium botulinum A1-A4 and B1 strains: BoNT/A3, /Ba4 and /B1 clusters are located within plasmids.</title>
        <authorList>
            <person name="Smith T.J."/>
            <person name="Hill K.K."/>
            <person name="Foley B.T."/>
            <person name="Detter J.C."/>
            <person name="Munk A.C."/>
            <person name="Bruce D.C."/>
            <person name="Doggett N.A."/>
            <person name="Smith L.A."/>
            <person name="Marks J.D."/>
            <person name="Xie G."/>
            <person name="Brettin T.S."/>
        </authorList>
    </citation>
    <scope>NUCLEOTIDE SEQUENCE [LARGE SCALE GENOMIC DNA]</scope>
    <source>
        <strain>Okra / Type B1</strain>
    </source>
</reference>
<proteinExistence type="inferred from homology"/>
<sequence>MLMPKRVKRRKVQRGRMKGKATRGNFIAYGDFGIQATECGWITSNQIEAARIAINRYVKRGGKVWIKIFPDKPVTEKPAETRMGSGKGSPEYWVAVVKPGRVLFEISGVSETVAREAMRLASHKLPVKTKFVTRRDFEEMGGEVNEG</sequence>
<gene>
    <name evidence="1" type="primary">rplP</name>
    <name type="ordered locus">CLD_1031</name>
</gene>
<protein>
    <recommendedName>
        <fullName evidence="1">Large ribosomal subunit protein uL16</fullName>
    </recommendedName>
    <alternativeName>
        <fullName evidence="2">50S ribosomal protein L16</fullName>
    </alternativeName>
</protein>
<name>RL16_CLOBK</name>
<evidence type="ECO:0000255" key="1">
    <source>
        <dbReference type="HAMAP-Rule" id="MF_01342"/>
    </source>
</evidence>
<evidence type="ECO:0000305" key="2"/>